<evidence type="ECO:0000255" key="1">
    <source>
        <dbReference type="PROSITE-ProRule" id="PRU00080"/>
    </source>
</evidence>
<gene>
    <name type="ordered locus">At1g31072</name>
    <name type="ORF">F28K20.1</name>
</gene>
<dbReference type="EMBL" id="AC004793">
    <property type="protein sequence ID" value="AAD21701.1"/>
    <property type="molecule type" value="Genomic_DNA"/>
</dbReference>
<dbReference type="EMBL" id="CP002684">
    <property type="status" value="NOT_ANNOTATED_CDS"/>
    <property type="molecule type" value="Genomic_DNA"/>
</dbReference>
<dbReference type="PIR" id="C86436">
    <property type="entry name" value="C86436"/>
</dbReference>
<dbReference type="Araport" id="AT1G31072"/>
<dbReference type="TAIR" id="AT1G31072"/>
<dbReference type="InParanoid" id="Q9SA01"/>
<dbReference type="PRO" id="PR:Q9SA01"/>
<dbReference type="Proteomes" id="UP000006548">
    <property type="component" value="Chromosome 1"/>
</dbReference>
<dbReference type="ExpressionAtlas" id="Q9SA01">
    <property type="expression patterns" value="baseline"/>
</dbReference>
<dbReference type="Gene3D" id="1.20.1280.50">
    <property type="match status" value="1"/>
</dbReference>
<dbReference type="InterPro" id="IPR013187">
    <property type="entry name" value="F-box-assoc_dom_typ3"/>
</dbReference>
<dbReference type="InterPro" id="IPR017451">
    <property type="entry name" value="F-box-assoc_interact_dom"/>
</dbReference>
<dbReference type="InterPro" id="IPR036047">
    <property type="entry name" value="F-box-like_dom_sf"/>
</dbReference>
<dbReference type="InterPro" id="IPR001810">
    <property type="entry name" value="F-box_dom"/>
</dbReference>
<dbReference type="NCBIfam" id="TIGR01640">
    <property type="entry name" value="F_box_assoc_1"/>
    <property type="match status" value="1"/>
</dbReference>
<dbReference type="PANTHER" id="PTHR31111">
    <property type="entry name" value="BNAA05G37150D PROTEIN-RELATED"/>
    <property type="match status" value="1"/>
</dbReference>
<dbReference type="PANTHER" id="PTHR31111:SF125">
    <property type="entry name" value="F-BOX PROTEIN CPR30-LIKE"/>
    <property type="match status" value="1"/>
</dbReference>
<dbReference type="Pfam" id="PF00646">
    <property type="entry name" value="F-box"/>
    <property type="match status" value="1"/>
</dbReference>
<dbReference type="Pfam" id="PF08268">
    <property type="entry name" value="FBA_3"/>
    <property type="match status" value="1"/>
</dbReference>
<dbReference type="SMART" id="SM00256">
    <property type="entry name" value="FBOX"/>
    <property type="match status" value="1"/>
</dbReference>
<dbReference type="SUPFAM" id="SSF81383">
    <property type="entry name" value="F-box domain"/>
    <property type="match status" value="1"/>
</dbReference>
<dbReference type="PROSITE" id="PS50181">
    <property type="entry name" value="FBOX"/>
    <property type="match status" value="1"/>
</dbReference>
<protein>
    <recommendedName>
        <fullName>Putative F-box protein At1g31072</fullName>
    </recommendedName>
</protein>
<feature type="chain" id="PRO_0000283301" description="Putative F-box protein At1g31072">
    <location>
        <begin position="1"/>
        <end position="193"/>
    </location>
</feature>
<feature type="domain" description="F-box" evidence="1">
    <location>
        <begin position="4"/>
        <end position="53"/>
    </location>
</feature>
<reference key="1">
    <citation type="journal article" date="2000" name="Nature">
        <title>Sequence and analysis of chromosome 1 of the plant Arabidopsis thaliana.</title>
        <authorList>
            <person name="Theologis A."/>
            <person name="Ecker J.R."/>
            <person name="Palm C.J."/>
            <person name="Federspiel N.A."/>
            <person name="Kaul S."/>
            <person name="White O."/>
            <person name="Alonso J."/>
            <person name="Altafi H."/>
            <person name="Araujo R."/>
            <person name="Bowman C.L."/>
            <person name="Brooks S.Y."/>
            <person name="Buehler E."/>
            <person name="Chan A."/>
            <person name="Chao Q."/>
            <person name="Chen H."/>
            <person name="Cheuk R.F."/>
            <person name="Chin C.W."/>
            <person name="Chung M.K."/>
            <person name="Conn L."/>
            <person name="Conway A.B."/>
            <person name="Conway A.R."/>
            <person name="Creasy T.H."/>
            <person name="Dewar K."/>
            <person name="Dunn P."/>
            <person name="Etgu P."/>
            <person name="Feldblyum T.V."/>
            <person name="Feng J.-D."/>
            <person name="Fong B."/>
            <person name="Fujii C.Y."/>
            <person name="Gill J.E."/>
            <person name="Goldsmith A.D."/>
            <person name="Haas B."/>
            <person name="Hansen N.F."/>
            <person name="Hughes B."/>
            <person name="Huizar L."/>
            <person name="Hunter J.L."/>
            <person name="Jenkins J."/>
            <person name="Johnson-Hopson C."/>
            <person name="Khan S."/>
            <person name="Khaykin E."/>
            <person name="Kim C.J."/>
            <person name="Koo H.L."/>
            <person name="Kremenetskaia I."/>
            <person name="Kurtz D.B."/>
            <person name="Kwan A."/>
            <person name="Lam B."/>
            <person name="Langin-Hooper S."/>
            <person name="Lee A."/>
            <person name="Lee J.M."/>
            <person name="Lenz C.A."/>
            <person name="Li J.H."/>
            <person name="Li Y.-P."/>
            <person name="Lin X."/>
            <person name="Liu S.X."/>
            <person name="Liu Z.A."/>
            <person name="Luros J.S."/>
            <person name="Maiti R."/>
            <person name="Marziali A."/>
            <person name="Militscher J."/>
            <person name="Miranda M."/>
            <person name="Nguyen M."/>
            <person name="Nierman W.C."/>
            <person name="Osborne B.I."/>
            <person name="Pai G."/>
            <person name="Peterson J."/>
            <person name="Pham P.K."/>
            <person name="Rizzo M."/>
            <person name="Rooney T."/>
            <person name="Rowley D."/>
            <person name="Sakano H."/>
            <person name="Salzberg S.L."/>
            <person name="Schwartz J.R."/>
            <person name="Shinn P."/>
            <person name="Southwick A.M."/>
            <person name="Sun H."/>
            <person name="Tallon L.J."/>
            <person name="Tambunga G."/>
            <person name="Toriumi M.J."/>
            <person name="Town C.D."/>
            <person name="Utterback T."/>
            <person name="Van Aken S."/>
            <person name="Vaysberg M."/>
            <person name="Vysotskaia V.S."/>
            <person name="Walker M."/>
            <person name="Wu D."/>
            <person name="Yu G."/>
            <person name="Fraser C.M."/>
            <person name="Venter J.C."/>
            <person name="Davis R.W."/>
        </authorList>
    </citation>
    <scope>NUCLEOTIDE SEQUENCE [LARGE SCALE GENOMIC DNA]</scope>
    <source>
        <strain>cv. Columbia</strain>
    </source>
</reference>
<reference key="2">
    <citation type="journal article" date="2017" name="Plant J.">
        <title>Araport11: a complete reannotation of the Arabidopsis thaliana reference genome.</title>
        <authorList>
            <person name="Cheng C.Y."/>
            <person name="Krishnakumar V."/>
            <person name="Chan A.P."/>
            <person name="Thibaud-Nissen F."/>
            <person name="Schobel S."/>
            <person name="Town C.D."/>
        </authorList>
    </citation>
    <scope>GENOME REANNOTATION</scope>
    <source>
        <strain>cv. Columbia</strain>
    </source>
</reference>
<sequence>MNREKTLDSIPIDVFLDIFSRLPAKSVGRSCCVSNRWASILGSQDFKELFLTMSSTRPRLLFALKPYNGDECLFYSSPHPHNHYEKSTVVVTADFHTKFPKSQSDCIYASGLSWRNIQCPLTHYPQGKGICINGVLYYLASHDEKPYMIVSFDVRYEKFRFINKKCHSYELINYKGNPIWPCLYIIGSFSHFA</sequence>
<proteinExistence type="predicted"/>
<accession>Q9SA01</accession>
<keyword id="KW-1185">Reference proteome</keyword>
<name>FB25_ARATH</name>
<organism>
    <name type="scientific">Arabidopsis thaliana</name>
    <name type="common">Mouse-ear cress</name>
    <dbReference type="NCBI Taxonomy" id="3702"/>
    <lineage>
        <taxon>Eukaryota</taxon>
        <taxon>Viridiplantae</taxon>
        <taxon>Streptophyta</taxon>
        <taxon>Embryophyta</taxon>
        <taxon>Tracheophyta</taxon>
        <taxon>Spermatophyta</taxon>
        <taxon>Magnoliopsida</taxon>
        <taxon>eudicotyledons</taxon>
        <taxon>Gunneridae</taxon>
        <taxon>Pentapetalae</taxon>
        <taxon>rosids</taxon>
        <taxon>malvids</taxon>
        <taxon>Brassicales</taxon>
        <taxon>Brassicaceae</taxon>
        <taxon>Camelineae</taxon>
        <taxon>Arabidopsis</taxon>
    </lineage>
</organism>